<keyword id="KW-0025">Alternative splicing</keyword>
<keyword id="KW-0963">Cytoplasm</keyword>
<keyword id="KW-0968">Cytoplasmic vesicle</keyword>
<keyword id="KW-0931">ER-Golgi transport</keyword>
<keyword id="KW-0333">Golgi apparatus</keyword>
<keyword id="KW-0472">Membrane</keyword>
<keyword id="KW-0653">Protein transport</keyword>
<keyword id="KW-1185">Reference proteome</keyword>
<keyword id="KW-0677">Repeat</keyword>
<keyword id="KW-0813">Transport</keyword>
<keyword id="KW-0853">WD repeat</keyword>
<evidence type="ECO:0000250" key="1"/>
<evidence type="ECO:0000256" key="2">
    <source>
        <dbReference type="SAM" id="MobiDB-lite"/>
    </source>
</evidence>
<evidence type="ECO:0000305" key="3"/>
<dbReference type="EMBL" id="AC009322">
    <property type="protein sequence ID" value="AAD55465.1"/>
    <property type="molecule type" value="Genomic_DNA"/>
</dbReference>
<dbReference type="EMBL" id="AC011717">
    <property type="protein sequence ID" value="AAG52258.1"/>
    <property type="status" value="ALT_SEQ"/>
    <property type="molecule type" value="Genomic_DNA"/>
</dbReference>
<dbReference type="EMBL" id="CP002684">
    <property type="protein sequence ID" value="AEE36339.2"/>
    <property type="molecule type" value="Genomic_DNA"/>
</dbReference>
<dbReference type="EMBL" id="AY090955">
    <property type="protein sequence ID" value="AAM14001.1"/>
    <property type="molecule type" value="mRNA"/>
</dbReference>
<dbReference type="PIR" id="C96831">
    <property type="entry name" value="C96831"/>
</dbReference>
<dbReference type="RefSeq" id="NP_001154478.1">
    <molecule id="Q9CAA0-1"/>
    <property type="nucleotide sequence ID" value="NM_001161006.2"/>
</dbReference>
<dbReference type="SMR" id="Q9CAA0"/>
<dbReference type="BioGRID" id="29557">
    <property type="interactions" value="11"/>
</dbReference>
<dbReference type="FunCoup" id="Q9CAA0">
    <property type="interactions" value="4673"/>
</dbReference>
<dbReference type="STRING" id="3702.Q9CAA0"/>
<dbReference type="iPTMnet" id="Q9CAA0"/>
<dbReference type="PaxDb" id="3702-AT1G79990.1"/>
<dbReference type="ProteomicsDB" id="241005">
    <molecule id="Q9CAA0-1"/>
</dbReference>
<dbReference type="EnsemblPlants" id="AT1G79990.1">
    <molecule id="Q9CAA0-1"/>
    <property type="protein sequence ID" value="AT1G79990.1"/>
    <property type="gene ID" value="AT1G79990"/>
</dbReference>
<dbReference type="GeneID" id="844339"/>
<dbReference type="Gramene" id="AT1G79990.1">
    <molecule id="Q9CAA0-1"/>
    <property type="protein sequence ID" value="AT1G79990.1"/>
    <property type="gene ID" value="AT1G79990"/>
</dbReference>
<dbReference type="KEGG" id="ath:AT1G79990"/>
<dbReference type="Araport" id="AT1G79990"/>
<dbReference type="TAIR" id="AT1G79990"/>
<dbReference type="eggNOG" id="KOG0276">
    <property type="taxonomic scope" value="Eukaryota"/>
</dbReference>
<dbReference type="eggNOG" id="KOG4697">
    <property type="taxonomic scope" value="Eukaryota"/>
</dbReference>
<dbReference type="HOGENOM" id="CLU_005507_0_0_1"/>
<dbReference type="InParanoid" id="Q9CAA0"/>
<dbReference type="OMA" id="YVDYYPQ"/>
<dbReference type="PhylomeDB" id="Q9CAA0"/>
<dbReference type="PRO" id="PR:Q9CAA0"/>
<dbReference type="Proteomes" id="UP000006548">
    <property type="component" value="Chromosome 1"/>
</dbReference>
<dbReference type="ExpressionAtlas" id="Q9CAA0">
    <property type="expression patterns" value="baseline and differential"/>
</dbReference>
<dbReference type="GO" id="GO:0030663">
    <property type="term" value="C:COPI-coated vesicle membrane"/>
    <property type="evidence" value="ECO:0007669"/>
    <property type="project" value="UniProtKB-SubCell"/>
</dbReference>
<dbReference type="GO" id="GO:0000139">
    <property type="term" value="C:Golgi membrane"/>
    <property type="evidence" value="ECO:0007669"/>
    <property type="project" value="UniProtKB-SubCell"/>
</dbReference>
<dbReference type="GO" id="GO:0030117">
    <property type="term" value="C:membrane coat"/>
    <property type="evidence" value="ECO:0007669"/>
    <property type="project" value="InterPro"/>
</dbReference>
<dbReference type="GO" id="GO:0005739">
    <property type="term" value="C:mitochondrion"/>
    <property type="evidence" value="ECO:0007005"/>
    <property type="project" value="TAIR"/>
</dbReference>
<dbReference type="GO" id="GO:0005198">
    <property type="term" value="F:structural molecule activity"/>
    <property type="evidence" value="ECO:0007669"/>
    <property type="project" value="InterPro"/>
</dbReference>
<dbReference type="GO" id="GO:0006886">
    <property type="term" value="P:intracellular protein transport"/>
    <property type="evidence" value="ECO:0007669"/>
    <property type="project" value="InterPro"/>
</dbReference>
<dbReference type="GO" id="GO:0016192">
    <property type="term" value="P:vesicle-mediated transport"/>
    <property type="evidence" value="ECO:0007669"/>
    <property type="project" value="UniProtKB-KW"/>
</dbReference>
<dbReference type="CDD" id="cd22947">
    <property type="entry name" value="Coatomer_WDAD_beta-like"/>
    <property type="match status" value="1"/>
</dbReference>
<dbReference type="CDD" id="cd00200">
    <property type="entry name" value="WD40"/>
    <property type="match status" value="1"/>
</dbReference>
<dbReference type="FunFam" id="1.25.40.470:FF:000001">
    <property type="entry name" value="Coatomer subunit beta"/>
    <property type="match status" value="1"/>
</dbReference>
<dbReference type="FunFam" id="2.130.10.10:FF:000008">
    <property type="entry name" value="Coatomer subunit beta"/>
    <property type="match status" value="1"/>
</dbReference>
<dbReference type="Gene3D" id="1.25.40.470">
    <property type="match status" value="1"/>
</dbReference>
<dbReference type="Gene3D" id="2.130.10.10">
    <property type="entry name" value="YVTN repeat-like/Quinoprotein amine dehydrogenase"/>
    <property type="match status" value="1"/>
</dbReference>
<dbReference type="InterPro" id="IPR006692">
    <property type="entry name" value="Beta-prop_COPA/B_2nd"/>
</dbReference>
<dbReference type="InterPro" id="IPR050844">
    <property type="entry name" value="Coatomer_complex_subunit"/>
</dbReference>
<dbReference type="InterPro" id="IPR016453">
    <property type="entry name" value="COPB2"/>
</dbReference>
<dbReference type="InterPro" id="IPR020472">
    <property type="entry name" value="G-protein_beta_WD-40_rep"/>
</dbReference>
<dbReference type="InterPro" id="IPR056176">
    <property type="entry name" value="TPR_COPA_B"/>
</dbReference>
<dbReference type="InterPro" id="IPR015943">
    <property type="entry name" value="WD40/YVTN_repeat-like_dom_sf"/>
</dbReference>
<dbReference type="InterPro" id="IPR036322">
    <property type="entry name" value="WD40_repeat_dom_sf"/>
</dbReference>
<dbReference type="InterPro" id="IPR001680">
    <property type="entry name" value="WD40_rpt"/>
</dbReference>
<dbReference type="PANTHER" id="PTHR19876">
    <property type="entry name" value="COATOMER"/>
    <property type="match status" value="1"/>
</dbReference>
<dbReference type="PANTHER" id="PTHR19876:SF54">
    <property type="entry name" value="COATOMER SUBUNIT BETA'-1"/>
    <property type="match status" value="1"/>
</dbReference>
<dbReference type="Pfam" id="PF04053">
    <property type="entry name" value="B-prop_COPA_B_2nd"/>
    <property type="match status" value="1"/>
</dbReference>
<dbReference type="Pfam" id="PF23953">
    <property type="entry name" value="TPR_COPA_B"/>
    <property type="match status" value="1"/>
</dbReference>
<dbReference type="Pfam" id="PF00400">
    <property type="entry name" value="WD40"/>
    <property type="match status" value="5"/>
</dbReference>
<dbReference type="PIRSF" id="PIRSF005567">
    <property type="entry name" value="Coatomer_beta'_subunit"/>
    <property type="match status" value="1"/>
</dbReference>
<dbReference type="PRINTS" id="PR00320">
    <property type="entry name" value="GPROTEINBRPT"/>
</dbReference>
<dbReference type="SMART" id="SM00320">
    <property type="entry name" value="WD40"/>
    <property type="match status" value="6"/>
</dbReference>
<dbReference type="SUPFAM" id="SSF50978">
    <property type="entry name" value="WD40 repeat-like"/>
    <property type="match status" value="2"/>
</dbReference>
<dbReference type="PROSITE" id="PS50082">
    <property type="entry name" value="WD_REPEATS_2"/>
    <property type="match status" value="4"/>
</dbReference>
<dbReference type="PROSITE" id="PS50294">
    <property type="entry name" value="WD_REPEATS_REGION"/>
    <property type="match status" value="1"/>
</dbReference>
<organism>
    <name type="scientific">Arabidopsis thaliana</name>
    <name type="common">Mouse-ear cress</name>
    <dbReference type="NCBI Taxonomy" id="3702"/>
    <lineage>
        <taxon>Eukaryota</taxon>
        <taxon>Viridiplantae</taxon>
        <taxon>Streptophyta</taxon>
        <taxon>Embryophyta</taxon>
        <taxon>Tracheophyta</taxon>
        <taxon>Spermatophyta</taxon>
        <taxon>Magnoliopsida</taxon>
        <taxon>eudicotyledons</taxon>
        <taxon>Gunneridae</taxon>
        <taxon>Pentapetalae</taxon>
        <taxon>rosids</taxon>
        <taxon>malvids</taxon>
        <taxon>Brassicales</taxon>
        <taxon>Brassicaceae</taxon>
        <taxon>Camelineae</taxon>
        <taxon>Arabidopsis</taxon>
    </lineage>
</organism>
<gene>
    <name type="ordered locus">At1g79990</name>
    <name type="ORF">F18B13.7</name>
    <name type="ORF">F19K16.4</name>
</gene>
<sequence>MPLRLEIKRKFAQRSERVKSVDLHPTEPWILASLYSGTLCIWNYQTQTMVKSFDVTELPVRSAKFIARKQWVVAGADDMFIRVYNYNTMDKIKVFEAHADYIRCVAVHPTLPYVLSSSDDMLIKLWDWEKGWLCTQIFEGHSHYVMQVTFNPKDTNTFASASLDRTIKIWNLGSPDPNFTLDAHLKGVNCVDYFTGGDKPYLITGSDDHTAKVWDYQTKSCVQTLEGHTHNVSAVSFHPELPIIITGSEDGTVRIWHATTYRLENTLNYGLERVWAIGHIKGSRRVVIGYDEGSIMVKLGREIPVASMDNSGKIIWAKHNEIHTVNIKSVGADEVTDGERLPLAVKELGTCDLYPQSLKHNPNGRFVVVCGDGEYIIYTALAWRNRSFGSALEFVWSSDGEHAVRESSTKIKIFSKNFQEKKTVRPTFSAEHIFGGTLLTMCSSDFICFYDWAECRLIRRIDVTVKNLYWADSGDLVAIASDTSFYILKFNRDIVSSYFDGGKQIDEEGIEDAFELLNETNERVRTGLWVGDCFIYTNSSWRLNYCVGGEVTTMYHLDRPMYLLGYLANQSRVYLIDKEFNVIGYTLLLSLIEYKTLVMRGDLEQANEVLPSIPKEHHNSVAHFLESRGMTEDALEVATDPDYRFELAIQLGRLAVAKDIAVEAQNESKWKQLGELAMSSGKLDMAEECMRHAMDLSGLLLLYSSLGDADGMMKLAALAKEQGKNNVAFLCLFMLGQVEDCLHLLVESNRIPEAALMARSYLPSKVSEIVALWRNDLTKISPKAAESLADPEEYPNLFEEWQVALSLENRAAETRGVHPPAGDYCSHADRDHTTLVDAFRIMQIEEEGRLEQGDVLDEVGEEGEDGEEEEEEDRQEESSDGRQQNVEEEAVVVDADSTDGAVLVNGNESEEQWVLTPPQE</sequence>
<name>COB21_ARATH</name>
<accession>Q9CAA0</accession>
<accession>F4HQE6</accession>
<accession>Q9SSD5</accession>
<comment type="function">
    <text evidence="1">The coatomer is a cytosolic protein complex that binds to dilysine motifs and reversibly associates with Golgi non-clathrin-coated vesicles, which further mediate biosynthetic protein transport from the ER, via the Golgi up to the trans Golgi network. Coatomer complex is required for budding from Golgi membranes, and is essential for the retrograde Golgi-to-ER transport of dilysine-tagged proteins (By similarity).</text>
</comment>
<comment type="subunit">
    <text evidence="1">Oligomeric complex that consists of at least the alpha, beta, beta', gamma, delta, epsilon and zeta subunits.</text>
</comment>
<comment type="subcellular location">
    <subcellularLocation>
        <location evidence="1">Cytoplasm</location>
    </subcellularLocation>
    <subcellularLocation>
        <location evidence="1">Golgi apparatus membrane</location>
        <topology evidence="1">Peripheral membrane protein</topology>
        <orientation evidence="1">Cytoplasmic side</orientation>
    </subcellularLocation>
    <subcellularLocation>
        <location evidence="1">Cytoplasmic vesicle</location>
        <location evidence="1">COPI-coated vesicle membrane</location>
        <topology evidence="1">Peripheral membrane protein</topology>
        <orientation evidence="1">Cytoplasmic side</orientation>
    </subcellularLocation>
    <text evidence="1">The coatomer is cytoplasmic or polymerized on the cytoplasmic side of the Golgi, as well as on the vesicles/buds originating from it.</text>
</comment>
<comment type="alternative products">
    <event type="alternative splicing"/>
    <isoform>
        <id>Q9CAA0-1</id>
        <name>1</name>
        <sequence type="displayed"/>
    </isoform>
    <text>A number of isoforms are produced. According to EST sequences.</text>
</comment>
<comment type="similarity">
    <text evidence="3">Belongs to the WD repeat COPB2 family.</text>
</comment>
<comment type="sequence caution" evidence="3">
    <conflict type="erroneous gene model prediction">
        <sequence resource="EMBL-CDS" id="AAG52258"/>
    </conflict>
</comment>
<protein>
    <recommendedName>
        <fullName>Coatomer subunit beta'-1</fullName>
    </recommendedName>
    <alternativeName>
        <fullName>Beta'-coat protein 1</fullName>
        <shortName>Beta'-COP 1</shortName>
    </alternativeName>
</protein>
<feature type="chain" id="PRO_0000285604" description="Coatomer subunit beta'-1">
    <location>
        <begin position="1"/>
        <end position="920"/>
    </location>
</feature>
<feature type="repeat" description="WD 1">
    <location>
        <begin position="13"/>
        <end position="52"/>
    </location>
</feature>
<feature type="repeat" description="WD 2">
    <location>
        <begin position="55"/>
        <end position="94"/>
    </location>
</feature>
<feature type="repeat" description="WD 3">
    <location>
        <begin position="97"/>
        <end position="136"/>
    </location>
</feature>
<feature type="repeat" description="WD 4">
    <location>
        <begin position="140"/>
        <end position="180"/>
    </location>
</feature>
<feature type="repeat" description="WD 5">
    <location>
        <begin position="183"/>
        <end position="224"/>
    </location>
</feature>
<feature type="repeat" description="WD 6">
    <location>
        <begin position="227"/>
        <end position="266"/>
    </location>
</feature>
<feature type="repeat" description="WD 7">
    <location>
        <begin position="350"/>
        <end position="392"/>
    </location>
</feature>
<feature type="repeat" description="WD 8">
    <location>
        <begin position="460"/>
        <end position="500"/>
    </location>
</feature>
<feature type="region of interest" description="Disordered" evidence="2">
    <location>
        <begin position="850"/>
        <end position="920"/>
    </location>
</feature>
<feature type="compositionally biased region" description="Acidic residues" evidence="2">
    <location>
        <begin position="854"/>
        <end position="875"/>
    </location>
</feature>
<proteinExistence type="evidence at transcript level"/>
<reference key="1">
    <citation type="journal article" date="2000" name="Nature">
        <title>Sequence and analysis of chromosome 1 of the plant Arabidopsis thaliana.</title>
        <authorList>
            <person name="Theologis A."/>
            <person name="Ecker J.R."/>
            <person name="Palm C.J."/>
            <person name="Federspiel N.A."/>
            <person name="Kaul S."/>
            <person name="White O."/>
            <person name="Alonso J."/>
            <person name="Altafi H."/>
            <person name="Araujo R."/>
            <person name="Bowman C.L."/>
            <person name="Brooks S.Y."/>
            <person name="Buehler E."/>
            <person name="Chan A."/>
            <person name="Chao Q."/>
            <person name="Chen H."/>
            <person name="Cheuk R.F."/>
            <person name="Chin C.W."/>
            <person name="Chung M.K."/>
            <person name="Conn L."/>
            <person name="Conway A.B."/>
            <person name="Conway A.R."/>
            <person name="Creasy T.H."/>
            <person name="Dewar K."/>
            <person name="Dunn P."/>
            <person name="Etgu P."/>
            <person name="Feldblyum T.V."/>
            <person name="Feng J.-D."/>
            <person name="Fong B."/>
            <person name="Fujii C.Y."/>
            <person name="Gill J.E."/>
            <person name="Goldsmith A.D."/>
            <person name="Haas B."/>
            <person name="Hansen N.F."/>
            <person name="Hughes B."/>
            <person name="Huizar L."/>
            <person name="Hunter J.L."/>
            <person name="Jenkins J."/>
            <person name="Johnson-Hopson C."/>
            <person name="Khan S."/>
            <person name="Khaykin E."/>
            <person name="Kim C.J."/>
            <person name="Koo H.L."/>
            <person name="Kremenetskaia I."/>
            <person name="Kurtz D.B."/>
            <person name="Kwan A."/>
            <person name="Lam B."/>
            <person name="Langin-Hooper S."/>
            <person name="Lee A."/>
            <person name="Lee J.M."/>
            <person name="Lenz C.A."/>
            <person name="Li J.H."/>
            <person name="Li Y.-P."/>
            <person name="Lin X."/>
            <person name="Liu S.X."/>
            <person name="Liu Z.A."/>
            <person name="Luros J.S."/>
            <person name="Maiti R."/>
            <person name="Marziali A."/>
            <person name="Militscher J."/>
            <person name="Miranda M."/>
            <person name="Nguyen M."/>
            <person name="Nierman W.C."/>
            <person name="Osborne B.I."/>
            <person name="Pai G."/>
            <person name="Peterson J."/>
            <person name="Pham P.K."/>
            <person name="Rizzo M."/>
            <person name="Rooney T."/>
            <person name="Rowley D."/>
            <person name="Sakano H."/>
            <person name="Salzberg S.L."/>
            <person name="Schwartz J.R."/>
            <person name="Shinn P."/>
            <person name="Southwick A.M."/>
            <person name="Sun H."/>
            <person name="Tallon L.J."/>
            <person name="Tambunga G."/>
            <person name="Toriumi M.J."/>
            <person name="Town C.D."/>
            <person name="Utterback T."/>
            <person name="Van Aken S."/>
            <person name="Vaysberg M."/>
            <person name="Vysotskaia V.S."/>
            <person name="Walker M."/>
            <person name="Wu D."/>
            <person name="Yu G."/>
            <person name="Fraser C.M."/>
            <person name="Venter J.C."/>
            <person name="Davis R.W."/>
        </authorList>
    </citation>
    <scope>NUCLEOTIDE SEQUENCE [LARGE SCALE GENOMIC DNA]</scope>
    <source>
        <strain>cv. Columbia</strain>
    </source>
</reference>
<reference key="2">
    <citation type="journal article" date="2017" name="Plant J.">
        <title>Araport11: a complete reannotation of the Arabidopsis thaliana reference genome.</title>
        <authorList>
            <person name="Cheng C.Y."/>
            <person name="Krishnakumar V."/>
            <person name="Chan A.P."/>
            <person name="Thibaud-Nissen F."/>
            <person name="Schobel S."/>
            <person name="Town C.D."/>
        </authorList>
    </citation>
    <scope>GENOME REANNOTATION</scope>
    <source>
        <strain>cv. Columbia</strain>
    </source>
</reference>
<reference key="3">
    <citation type="journal article" date="2003" name="Science">
        <title>Empirical analysis of transcriptional activity in the Arabidopsis genome.</title>
        <authorList>
            <person name="Yamada K."/>
            <person name="Lim J."/>
            <person name="Dale J.M."/>
            <person name="Chen H."/>
            <person name="Shinn P."/>
            <person name="Palm C.J."/>
            <person name="Southwick A.M."/>
            <person name="Wu H.C."/>
            <person name="Kim C.J."/>
            <person name="Nguyen M."/>
            <person name="Pham P.K."/>
            <person name="Cheuk R.F."/>
            <person name="Karlin-Newmann G."/>
            <person name="Liu S.X."/>
            <person name="Lam B."/>
            <person name="Sakano H."/>
            <person name="Wu T."/>
            <person name="Yu G."/>
            <person name="Miranda M."/>
            <person name="Quach H.L."/>
            <person name="Tripp M."/>
            <person name="Chang C.H."/>
            <person name="Lee J.M."/>
            <person name="Toriumi M.J."/>
            <person name="Chan M.M."/>
            <person name="Tang C.C."/>
            <person name="Onodera C.S."/>
            <person name="Deng J.M."/>
            <person name="Akiyama K."/>
            <person name="Ansari Y."/>
            <person name="Arakawa T."/>
            <person name="Banh J."/>
            <person name="Banno F."/>
            <person name="Bowser L."/>
            <person name="Brooks S.Y."/>
            <person name="Carninci P."/>
            <person name="Chao Q."/>
            <person name="Choy N."/>
            <person name="Enju A."/>
            <person name="Goldsmith A.D."/>
            <person name="Gurjal M."/>
            <person name="Hansen N.F."/>
            <person name="Hayashizaki Y."/>
            <person name="Johnson-Hopson C."/>
            <person name="Hsuan V.W."/>
            <person name="Iida K."/>
            <person name="Karnes M."/>
            <person name="Khan S."/>
            <person name="Koesema E."/>
            <person name="Ishida J."/>
            <person name="Jiang P.X."/>
            <person name="Jones T."/>
            <person name="Kawai J."/>
            <person name="Kamiya A."/>
            <person name="Meyers C."/>
            <person name="Nakajima M."/>
            <person name="Narusaka M."/>
            <person name="Seki M."/>
            <person name="Sakurai T."/>
            <person name="Satou M."/>
            <person name="Tamse R."/>
            <person name="Vaysberg M."/>
            <person name="Wallender E.K."/>
            <person name="Wong C."/>
            <person name="Yamamura Y."/>
            <person name="Yuan S."/>
            <person name="Shinozaki K."/>
            <person name="Davis R.W."/>
            <person name="Theologis A."/>
            <person name="Ecker J.R."/>
        </authorList>
    </citation>
    <scope>NUCLEOTIDE SEQUENCE [LARGE SCALE MRNA]</scope>
    <source>
        <strain>cv. Columbia</strain>
    </source>
</reference>